<reference key="1">
    <citation type="journal article" date="1999" name="Genetics">
        <title>Divergence of the hyperthermophilic archaea Pyrococcus furiosus and P. horikoshii inferred from complete genomic sequences.</title>
        <authorList>
            <person name="Maeder D.L."/>
            <person name="Weiss R.B."/>
            <person name="Dunn D.M."/>
            <person name="Cherry J.L."/>
            <person name="Gonzalez J.M."/>
            <person name="DiRuggiero J."/>
            <person name="Robb F.T."/>
        </authorList>
    </citation>
    <scope>NUCLEOTIDE SEQUENCE [LARGE SCALE GENOMIC DNA]</scope>
    <source>
        <strain>ATCC 43587 / DSM 3638 / JCM 8422 / Vc1</strain>
    </source>
</reference>
<dbReference type="EC" id="6.1.1.16" evidence="1"/>
<dbReference type="EMBL" id="AE009950">
    <property type="protein sequence ID" value="AAL81148.1"/>
    <property type="status" value="ALT_INIT"/>
    <property type="molecule type" value="Genomic_DNA"/>
</dbReference>
<dbReference type="RefSeq" id="WP_014835307.1">
    <property type="nucleotide sequence ID" value="NZ_CP023154.1"/>
</dbReference>
<dbReference type="PDB" id="8QHP">
    <property type="method" value="EM"/>
    <property type="resolution" value="2.80 A"/>
    <property type="chains" value="A/B=2-477"/>
</dbReference>
<dbReference type="PDBsum" id="8QHP"/>
<dbReference type="EMDB" id="EMD-18415"/>
<dbReference type="SMR" id="Q8U227"/>
<dbReference type="STRING" id="186497.PF1024"/>
<dbReference type="PaxDb" id="186497-PF1024"/>
<dbReference type="GeneID" id="41712835"/>
<dbReference type="KEGG" id="pfu:PF1024"/>
<dbReference type="PATRIC" id="fig|186497.12.peg.1085"/>
<dbReference type="eggNOG" id="arCOG00486">
    <property type="taxonomic scope" value="Archaea"/>
</dbReference>
<dbReference type="HOGENOM" id="CLU_013528_0_1_2"/>
<dbReference type="OrthoDB" id="9445at2157"/>
<dbReference type="PhylomeDB" id="Q8U227"/>
<dbReference type="Proteomes" id="UP000001013">
    <property type="component" value="Chromosome"/>
</dbReference>
<dbReference type="GO" id="GO:0005737">
    <property type="term" value="C:cytoplasm"/>
    <property type="evidence" value="ECO:0007669"/>
    <property type="project" value="UniProtKB-SubCell"/>
</dbReference>
<dbReference type="GO" id="GO:0005524">
    <property type="term" value="F:ATP binding"/>
    <property type="evidence" value="ECO:0007669"/>
    <property type="project" value="UniProtKB-UniRule"/>
</dbReference>
<dbReference type="GO" id="GO:0004817">
    <property type="term" value="F:cysteine-tRNA ligase activity"/>
    <property type="evidence" value="ECO:0007669"/>
    <property type="project" value="UniProtKB-UniRule"/>
</dbReference>
<dbReference type="GO" id="GO:0008270">
    <property type="term" value="F:zinc ion binding"/>
    <property type="evidence" value="ECO:0007669"/>
    <property type="project" value="UniProtKB-UniRule"/>
</dbReference>
<dbReference type="GO" id="GO:0006423">
    <property type="term" value="P:cysteinyl-tRNA aminoacylation"/>
    <property type="evidence" value="ECO:0007669"/>
    <property type="project" value="UniProtKB-UniRule"/>
</dbReference>
<dbReference type="CDD" id="cd00672">
    <property type="entry name" value="CysRS_core"/>
    <property type="match status" value="1"/>
</dbReference>
<dbReference type="FunFam" id="3.40.50.620:FF:000009">
    <property type="entry name" value="Cysteine--tRNA ligase"/>
    <property type="match status" value="1"/>
</dbReference>
<dbReference type="Gene3D" id="1.20.120.1910">
    <property type="entry name" value="Cysteine-tRNA ligase, C-terminal anti-codon recognition domain"/>
    <property type="match status" value="1"/>
</dbReference>
<dbReference type="Gene3D" id="3.40.50.620">
    <property type="entry name" value="HUPs"/>
    <property type="match status" value="1"/>
</dbReference>
<dbReference type="HAMAP" id="MF_00041">
    <property type="entry name" value="Cys_tRNA_synth"/>
    <property type="match status" value="1"/>
</dbReference>
<dbReference type="InterPro" id="IPR015803">
    <property type="entry name" value="Cys-tRNA-ligase"/>
</dbReference>
<dbReference type="InterPro" id="IPR015273">
    <property type="entry name" value="Cys-tRNA-synt_Ia_DALR"/>
</dbReference>
<dbReference type="InterPro" id="IPR024909">
    <property type="entry name" value="Cys-tRNA/MSH_ligase"/>
</dbReference>
<dbReference type="InterPro" id="IPR014729">
    <property type="entry name" value="Rossmann-like_a/b/a_fold"/>
</dbReference>
<dbReference type="InterPro" id="IPR032678">
    <property type="entry name" value="tRNA-synt_1_cat_dom"/>
</dbReference>
<dbReference type="InterPro" id="IPR009080">
    <property type="entry name" value="tRNAsynth_Ia_anticodon-bd"/>
</dbReference>
<dbReference type="NCBIfam" id="TIGR00435">
    <property type="entry name" value="cysS"/>
    <property type="match status" value="1"/>
</dbReference>
<dbReference type="PANTHER" id="PTHR10890:SF3">
    <property type="entry name" value="CYSTEINE--TRNA LIGASE, CYTOPLASMIC"/>
    <property type="match status" value="1"/>
</dbReference>
<dbReference type="PANTHER" id="PTHR10890">
    <property type="entry name" value="CYSTEINYL-TRNA SYNTHETASE"/>
    <property type="match status" value="1"/>
</dbReference>
<dbReference type="Pfam" id="PF09190">
    <property type="entry name" value="DALR_2"/>
    <property type="match status" value="1"/>
</dbReference>
<dbReference type="Pfam" id="PF01406">
    <property type="entry name" value="tRNA-synt_1e"/>
    <property type="match status" value="1"/>
</dbReference>
<dbReference type="PRINTS" id="PR00983">
    <property type="entry name" value="TRNASYNTHCYS"/>
</dbReference>
<dbReference type="SMART" id="SM00840">
    <property type="entry name" value="DALR_2"/>
    <property type="match status" value="1"/>
</dbReference>
<dbReference type="SUPFAM" id="SSF47323">
    <property type="entry name" value="Anticodon-binding domain of a subclass of class I aminoacyl-tRNA synthetases"/>
    <property type="match status" value="1"/>
</dbReference>
<dbReference type="SUPFAM" id="SSF52374">
    <property type="entry name" value="Nucleotidylyl transferase"/>
    <property type="match status" value="1"/>
</dbReference>
<evidence type="ECO:0000255" key="1">
    <source>
        <dbReference type="HAMAP-Rule" id="MF_00041"/>
    </source>
</evidence>
<evidence type="ECO:0000305" key="2"/>
<evidence type="ECO:0007829" key="3">
    <source>
        <dbReference type="PDB" id="8QHP"/>
    </source>
</evidence>
<keyword id="KW-0002">3D-structure</keyword>
<keyword id="KW-0030">Aminoacyl-tRNA synthetase</keyword>
<keyword id="KW-0067">ATP-binding</keyword>
<keyword id="KW-0963">Cytoplasm</keyword>
<keyword id="KW-0436">Ligase</keyword>
<keyword id="KW-0479">Metal-binding</keyword>
<keyword id="KW-0547">Nucleotide-binding</keyword>
<keyword id="KW-0648">Protein biosynthesis</keyword>
<keyword id="KW-1185">Reference proteome</keyword>
<keyword id="KW-0862">Zinc</keyword>
<comment type="catalytic activity">
    <reaction evidence="1">
        <text>tRNA(Cys) + L-cysteine + ATP = L-cysteinyl-tRNA(Cys) + AMP + diphosphate</text>
        <dbReference type="Rhea" id="RHEA:17773"/>
        <dbReference type="Rhea" id="RHEA-COMP:9661"/>
        <dbReference type="Rhea" id="RHEA-COMP:9679"/>
        <dbReference type="ChEBI" id="CHEBI:30616"/>
        <dbReference type="ChEBI" id="CHEBI:33019"/>
        <dbReference type="ChEBI" id="CHEBI:35235"/>
        <dbReference type="ChEBI" id="CHEBI:78442"/>
        <dbReference type="ChEBI" id="CHEBI:78517"/>
        <dbReference type="ChEBI" id="CHEBI:456215"/>
        <dbReference type="EC" id="6.1.1.16"/>
    </reaction>
</comment>
<comment type="cofactor">
    <cofactor evidence="1">
        <name>Zn(2+)</name>
        <dbReference type="ChEBI" id="CHEBI:29105"/>
    </cofactor>
    <text evidence="1">Binds 1 zinc ion per subunit.</text>
</comment>
<comment type="subcellular location">
    <subcellularLocation>
        <location evidence="1">Cytoplasm</location>
    </subcellularLocation>
</comment>
<comment type="similarity">
    <text evidence="1">Belongs to the class-I aminoacyl-tRNA synthetase family.</text>
</comment>
<comment type="sequence caution" evidence="2">
    <conflict type="erroneous initiation">
        <sequence resource="EMBL-CDS" id="AAL81148"/>
    </conflict>
</comment>
<name>SYC_PYRFU</name>
<organism>
    <name type="scientific">Pyrococcus furiosus (strain ATCC 43587 / DSM 3638 / JCM 8422 / Vc1)</name>
    <dbReference type="NCBI Taxonomy" id="186497"/>
    <lineage>
        <taxon>Archaea</taxon>
        <taxon>Methanobacteriati</taxon>
        <taxon>Methanobacteriota</taxon>
        <taxon>Thermococci</taxon>
        <taxon>Thermococcales</taxon>
        <taxon>Thermococcaceae</taxon>
        <taxon>Pyrococcus</taxon>
    </lineage>
</organism>
<sequence length="477" mass="56107">MLKVYNTLTKQKEEFKPLREGEVKMYVCGPTVYDYPHLGHARTYIAFDVIRRYLEHKGYTVLMVMNFTDIDDKIIKRARETGEDPKELAERFIKIFLEDMEALKVKPADIYPRVTDHIDDIIEFIGKLKEKGYAYEGSDGIYFEVKKFPEYGKLSGVKIEDLQKGARVEPGEGKKNPEDFALWKKAKPGEPKWDSPWGEGRPGWHIECSVMSSKYLGESFDIHGGGNDLIFPHHENEIAQSEACFGHEWVKYWLHTGFVMVKGEKMSKSLGNFVTIRELLKRYEPEVIRFFVLQKHYRSPLEYTEEGLQHAKNNLQRLYNTLENIRVALRNAEISYTWGELEFKTYEIIREGKRKFYEAMDDDFNTAEALKAVFEVANAINKYLTEANKPKESILRKALEFFKIVSEVFGVFEDYFREETKEREESEKLIELLVEVRKQLRKEKRYELADMIREELKKLGIQLEDRGSETTWKRIIT</sequence>
<proteinExistence type="evidence at protein level"/>
<accession>Q8U227</accession>
<protein>
    <recommendedName>
        <fullName evidence="1">Cysteine--tRNA ligase</fullName>
        <ecNumber evidence="1">6.1.1.16</ecNumber>
    </recommendedName>
    <alternativeName>
        <fullName evidence="1">Cysteinyl-tRNA synthetase</fullName>
        <shortName evidence="1">CysRS</shortName>
    </alternativeName>
</protein>
<feature type="chain" id="PRO_0000159542" description="Cysteine--tRNA ligase">
    <location>
        <begin position="1"/>
        <end position="477"/>
    </location>
</feature>
<feature type="short sequence motif" description="'HIGH' region">
    <location>
        <begin position="30"/>
        <end position="40"/>
    </location>
</feature>
<feature type="short sequence motif" description="'KMSKS' region">
    <location>
        <begin position="265"/>
        <end position="269"/>
    </location>
</feature>
<feature type="binding site" evidence="1">
    <location>
        <position position="28"/>
    </location>
    <ligand>
        <name>Zn(2+)</name>
        <dbReference type="ChEBI" id="CHEBI:29105"/>
    </ligand>
</feature>
<feature type="binding site" evidence="1">
    <location>
        <position position="208"/>
    </location>
    <ligand>
        <name>Zn(2+)</name>
        <dbReference type="ChEBI" id="CHEBI:29105"/>
    </ligand>
</feature>
<feature type="binding site" evidence="1">
    <location>
        <position position="233"/>
    </location>
    <ligand>
        <name>Zn(2+)</name>
        <dbReference type="ChEBI" id="CHEBI:29105"/>
    </ligand>
</feature>
<feature type="binding site" evidence="1">
    <location>
        <position position="237"/>
    </location>
    <ligand>
        <name>Zn(2+)</name>
        <dbReference type="ChEBI" id="CHEBI:29105"/>
    </ligand>
</feature>
<feature type="binding site" evidence="1">
    <location>
        <position position="268"/>
    </location>
    <ligand>
        <name>ATP</name>
        <dbReference type="ChEBI" id="CHEBI:30616"/>
    </ligand>
</feature>
<feature type="strand" evidence="3">
    <location>
        <begin position="3"/>
        <end position="6"/>
    </location>
</feature>
<feature type="turn" evidence="3">
    <location>
        <begin position="7"/>
        <end position="10"/>
    </location>
</feature>
<feature type="strand" evidence="3">
    <location>
        <begin position="11"/>
        <end position="14"/>
    </location>
</feature>
<feature type="strand" evidence="3">
    <location>
        <begin position="22"/>
        <end position="27"/>
    </location>
</feature>
<feature type="strand" evidence="3">
    <location>
        <begin position="31"/>
        <end position="34"/>
    </location>
</feature>
<feature type="helix" evidence="3">
    <location>
        <begin position="38"/>
        <end position="56"/>
    </location>
</feature>
<feature type="strand" evidence="3">
    <location>
        <begin position="60"/>
        <end position="65"/>
    </location>
</feature>
<feature type="helix" evidence="3">
    <location>
        <begin position="72"/>
        <end position="81"/>
    </location>
</feature>
<feature type="helix" evidence="3">
    <location>
        <begin position="87"/>
        <end position="102"/>
    </location>
</feature>
<feature type="helix" evidence="3">
    <location>
        <begin position="114"/>
        <end position="116"/>
    </location>
</feature>
<feature type="helix" evidence="3">
    <location>
        <begin position="118"/>
        <end position="130"/>
    </location>
</feature>
<feature type="strand" evidence="3">
    <location>
        <begin position="133"/>
        <end position="136"/>
    </location>
</feature>
<feature type="strand" evidence="3">
    <location>
        <begin position="138"/>
        <end position="143"/>
    </location>
</feature>
<feature type="helix" evidence="3">
    <location>
        <begin position="145"/>
        <end position="147"/>
    </location>
</feature>
<feature type="turn" evidence="3">
    <location>
        <begin position="149"/>
        <end position="155"/>
    </location>
</feature>
<feature type="helix" evidence="3">
    <location>
        <begin position="159"/>
        <end position="162"/>
    </location>
</feature>
<feature type="strand" evidence="3">
    <location>
        <begin position="180"/>
        <end position="185"/>
    </location>
</feature>
<feature type="strand" evidence="3">
    <location>
        <begin position="199"/>
        <end position="202"/>
    </location>
</feature>
<feature type="helix" evidence="3">
    <location>
        <begin position="206"/>
        <end position="216"/>
    </location>
</feature>
<feature type="strand" evidence="3">
    <location>
        <begin position="220"/>
        <end position="226"/>
    </location>
</feature>
<feature type="helix" evidence="3">
    <location>
        <begin position="227"/>
        <end position="230"/>
    </location>
</feature>
<feature type="helix" evidence="3">
    <location>
        <begin position="233"/>
        <end position="245"/>
    </location>
</feature>
<feature type="strand" evidence="3">
    <location>
        <begin position="250"/>
        <end position="256"/>
    </location>
</feature>
<feature type="strand" evidence="3">
    <location>
        <begin position="259"/>
        <end position="261"/>
    </location>
</feature>
<feature type="turn" evidence="3">
    <location>
        <begin position="268"/>
        <end position="271"/>
    </location>
</feature>
<feature type="helix" evidence="3">
    <location>
        <begin position="276"/>
        <end position="280"/>
    </location>
</feature>
<feature type="helix" evidence="3">
    <location>
        <begin position="285"/>
        <end position="293"/>
    </location>
</feature>
<feature type="helix" evidence="3">
    <location>
        <begin position="305"/>
        <end position="328"/>
    </location>
</feature>
<feature type="helix" evidence="3">
    <location>
        <begin position="340"/>
        <end position="361"/>
    </location>
</feature>
<feature type="helix" evidence="3">
    <location>
        <begin position="366"/>
        <end position="386"/>
    </location>
</feature>
<feature type="helix" evidence="3">
    <location>
        <begin position="392"/>
        <end position="409"/>
    </location>
</feature>
<feature type="helix" evidence="3">
    <location>
        <begin position="413"/>
        <end position="417"/>
    </location>
</feature>
<gene>
    <name evidence="1" type="primary">cysS</name>
    <name type="ordered locus">PF1024</name>
</gene>